<sequence>MPTLLLGASIPFGTIAYTLFIFLLLLVMLRKFAWGPLMGIMKEREEHVTNEIDAAERSNAEAKKLVEEQREMLKQSRVEAQELIERAKKQAVDQKDVIVAAAKEEAESIKTSAVQEIQREKEQAIAALQEQVASLSVHIASKVIEKELKEEDQVKLIRDYIKEVGEAR</sequence>
<feature type="chain" id="PRO_0000368336" description="ATP synthase subunit b">
    <location>
        <begin position="1"/>
        <end position="168"/>
    </location>
</feature>
<feature type="transmembrane region" description="Helical" evidence="1">
    <location>
        <begin position="9"/>
        <end position="29"/>
    </location>
</feature>
<evidence type="ECO:0000255" key="1">
    <source>
        <dbReference type="HAMAP-Rule" id="MF_01398"/>
    </source>
</evidence>
<proteinExistence type="inferred from homology"/>
<dbReference type="EMBL" id="CP000903">
    <property type="protein sequence ID" value="ABY46253.1"/>
    <property type="molecule type" value="Genomic_DNA"/>
</dbReference>
<dbReference type="RefSeq" id="WP_002016287.1">
    <property type="nucleotide sequence ID" value="NC_010184.1"/>
</dbReference>
<dbReference type="SMR" id="A9VSA7"/>
<dbReference type="GeneID" id="66265135"/>
<dbReference type="KEGG" id="bwe:BcerKBAB4_5107"/>
<dbReference type="eggNOG" id="COG0711">
    <property type="taxonomic scope" value="Bacteria"/>
</dbReference>
<dbReference type="HOGENOM" id="CLU_079215_4_2_9"/>
<dbReference type="Proteomes" id="UP000002154">
    <property type="component" value="Chromosome"/>
</dbReference>
<dbReference type="GO" id="GO:0005886">
    <property type="term" value="C:plasma membrane"/>
    <property type="evidence" value="ECO:0007669"/>
    <property type="project" value="UniProtKB-SubCell"/>
</dbReference>
<dbReference type="GO" id="GO:0045259">
    <property type="term" value="C:proton-transporting ATP synthase complex"/>
    <property type="evidence" value="ECO:0007669"/>
    <property type="project" value="UniProtKB-KW"/>
</dbReference>
<dbReference type="GO" id="GO:0046933">
    <property type="term" value="F:proton-transporting ATP synthase activity, rotational mechanism"/>
    <property type="evidence" value="ECO:0007669"/>
    <property type="project" value="UniProtKB-UniRule"/>
</dbReference>
<dbReference type="GO" id="GO:0046961">
    <property type="term" value="F:proton-transporting ATPase activity, rotational mechanism"/>
    <property type="evidence" value="ECO:0007669"/>
    <property type="project" value="TreeGrafter"/>
</dbReference>
<dbReference type="CDD" id="cd06503">
    <property type="entry name" value="ATP-synt_Fo_b"/>
    <property type="match status" value="1"/>
</dbReference>
<dbReference type="Gene3D" id="6.10.250.1580">
    <property type="match status" value="1"/>
</dbReference>
<dbReference type="HAMAP" id="MF_01398">
    <property type="entry name" value="ATP_synth_b_bprime"/>
    <property type="match status" value="1"/>
</dbReference>
<dbReference type="InterPro" id="IPR028987">
    <property type="entry name" value="ATP_synth_B-like_membr_sf"/>
</dbReference>
<dbReference type="InterPro" id="IPR002146">
    <property type="entry name" value="ATP_synth_b/b'su_bac/chlpt"/>
</dbReference>
<dbReference type="InterPro" id="IPR005864">
    <property type="entry name" value="ATP_synth_F0_bsu_bac"/>
</dbReference>
<dbReference type="InterPro" id="IPR050059">
    <property type="entry name" value="ATP_synthase_B_chain"/>
</dbReference>
<dbReference type="NCBIfam" id="TIGR01144">
    <property type="entry name" value="ATP_synt_b"/>
    <property type="match status" value="1"/>
</dbReference>
<dbReference type="PANTHER" id="PTHR33445:SF1">
    <property type="entry name" value="ATP SYNTHASE SUBUNIT B"/>
    <property type="match status" value="1"/>
</dbReference>
<dbReference type="PANTHER" id="PTHR33445">
    <property type="entry name" value="ATP SYNTHASE SUBUNIT B', CHLOROPLASTIC"/>
    <property type="match status" value="1"/>
</dbReference>
<dbReference type="Pfam" id="PF00430">
    <property type="entry name" value="ATP-synt_B"/>
    <property type="match status" value="1"/>
</dbReference>
<dbReference type="SUPFAM" id="SSF81573">
    <property type="entry name" value="F1F0 ATP synthase subunit B, membrane domain"/>
    <property type="match status" value="1"/>
</dbReference>
<organism>
    <name type="scientific">Bacillus mycoides (strain KBAB4)</name>
    <name type="common">Bacillus weihenstephanensis</name>
    <dbReference type="NCBI Taxonomy" id="315730"/>
    <lineage>
        <taxon>Bacteria</taxon>
        <taxon>Bacillati</taxon>
        <taxon>Bacillota</taxon>
        <taxon>Bacilli</taxon>
        <taxon>Bacillales</taxon>
        <taxon>Bacillaceae</taxon>
        <taxon>Bacillus</taxon>
        <taxon>Bacillus cereus group</taxon>
    </lineage>
</organism>
<comment type="function">
    <text evidence="1">F(1)F(0) ATP synthase produces ATP from ADP in the presence of a proton or sodium gradient. F-type ATPases consist of two structural domains, F(1) containing the extramembraneous catalytic core and F(0) containing the membrane proton channel, linked together by a central stalk and a peripheral stalk. During catalysis, ATP synthesis in the catalytic domain of F(1) is coupled via a rotary mechanism of the central stalk subunits to proton translocation.</text>
</comment>
<comment type="function">
    <text evidence="1">Component of the F(0) channel, it forms part of the peripheral stalk, linking F(1) to F(0).</text>
</comment>
<comment type="subunit">
    <text evidence="1">F-type ATPases have 2 components, F(1) - the catalytic core - and F(0) - the membrane proton channel. F(1) has five subunits: alpha(3), beta(3), gamma(1), delta(1), epsilon(1). F(0) has three main subunits: a(1), b(2) and c(10-14). The alpha and beta chains form an alternating ring which encloses part of the gamma chain. F(1) is attached to F(0) by a central stalk formed by the gamma and epsilon chains, while a peripheral stalk is formed by the delta and b chains.</text>
</comment>
<comment type="subcellular location">
    <subcellularLocation>
        <location evidence="1">Cell membrane</location>
        <topology evidence="1">Single-pass membrane protein</topology>
    </subcellularLocation>
</comment>
<comment type="similarity">
    <text evidence="1">Belongs to the ATPase B chain family.</text>
</comment>
<keyword id="KW-0066">ATP synthesis</keyword>
<keyword id="KW-1003">Cell membrane</keyword>
<keyword id="KW-0138">CF(0)</keyword>
<keyword id="KW-0375">Hydrogen ion transport</keyword>
<keyword id="KW-0406">Ion transport</keyword>
<keyword id="KW-0472">Membrane</keyword>
<keyword id="KW-0812">Transmembrane</keyword>
<keyword id="KW-1133">Transmembrane helix</keyword>
<keyword id="KW-0813">Transport</keyword>
<reference key="1">
    <citation type="journal article" date="2008" name="Chem. Biol. Interact.">
        <title>Extending the Bacillus cereus group genomics to putative food-borne pathogens of different toxicity.</title>
        <authorList>
            <person name="Lapidus A."/>
            <person name="Goltsman E."/>
            <person name="Auger S."/>
            <person name="Galleron N."/>
            <person name="Segurens B."/>
            <person name="Dossat C."/>
            <person name="Land M.L."/>
            <person name="Broussolle V."/>
            <person name="Brillard J."/>
            <person name="Guinebretiere M.-H."/>
            <person name="Sanchis V."/>
            <person name="Nguen-the C."/>
            <person name="Lereclus D."/>
            <person name="Richardson P."/>
            <person name="Wincker P."/>
            <person name="Weissenbach J."/>
            <person name="Ehrlich S.D."/>
            <person name="Sorokin A."/>
        </authorList>
    </citation>
    <scope>NUCLEOTIDE SEQUENCE [LARGE SCALE GENOMIC DNA]</scope>
    <source>
        <strain>KBAB4</strain>
    </source>
</reference>
<protein>
    <recommendedName>
        <fullName evidence="1">ATP synthase subunit b</fullName>
    </recommendedName>
    <alternativeName>
        <fullName evidence="1">ATP synthase F(0) sector subunit b</fullName>
    </alternativeName>
    <alternativeName>
        <fullName evidence="1">ATPase subunit I</fullName>
    </alternativeName>
    <alternativeName>
        <fullName evidence="1">F-type ATPase subunit b</fullName>
        <shortName evidence="1">F-ATPase subunit b</shortName>
    </alternativeName>
</protein>
<gene>
    <name evidence="1" type="primary">atpF</name>
    <name type="ordered locus">BcerKBAB4_5107</name>
</gene>
<name>ATPF_BACMK</name>
<accession>A9VSA7</accession>